<organism>
    <name type="scientific">Shigella dysenteriae serotype 1 (strain Sd197)</name>
    <dbReference type="NCBI Taxonomy" id="300267"/>
    <lineage>
        <taxon>Bacteria</taxon>
        <taxon>Pseudomonadati</taxon>
        <taxon>Pseudomonadota</taxon>
        <taxon>Gammaproteobacteria</taxon>
        <taxon>Enterobacterales</taxon>
        <taxon>Enterobacteriaceae</taxon>
        <taxon>Shigella</taxon>
    </lineage>
</organism>
<accession>Q32ID7</accession>
<sequence length="375" mass="41842">MQCALYDAGRCRSCQWITQPIPEQLSAKTADLKNLLADFPVEEWCAPVSGPEQGFRNKAKMVVSGSVEKPLLGMLHRDGTPEDLCDCPLYPASFAPVFAALKPFIARAGLTPYNVARKRGELKYILLTESQSDGGMMLRFVLRSDTKLAQLRKALPWLHEQLPQLKVITVNIQPVHMAIMEGETEIYLTEHQALAERFNDVPLWIRPQSFFQTNPAVASQLYATARDWVRQLPVTHMWDLFCGVGGFGLHCATPDMQLTGIEIAPEAIACAKQSAAELGLTCLQFQALDSTQFATAQGEVPELVLVNPPRRGIGKPLCDYLSTMAPCFIIYSSCNAQTMAKDIRELPGYRIERVQLFDMFPHTAHYEVLTLQVKI</sequence>
<evidence type="ECO:0000255" key="1">
    <source>
        <dbReference type="HAMAP-Rule" id="MF_01012"/>
    </source>
</evidence>
<dbReference type="EC" id="2.1.1.189" evidence="1"/>
<dbReference type="EMBL" id="CP000034">
    <property type="protein sequence ID" value="ABB60920.1"/>
    <property type="molecule type" value="Genomic_DNA"/>
</dbReference>
<dbReference type="RefSeq" id="WP_001149702.1">
    <property type="nucleotide sequence ID" value="NC_007606.1"/>
</dbReference>
<dbReference type="RefSeq" id="YP_402409.1">
    <property type="nucleotide sequence ID" value="NC_007606.1"/>
</dbReference>
<dbReference type="SMR" id="Q32ID7"/>
<dbReference type="STRING" id="300267.SDY_0736"/>
<dbReference type="EnsemblBacteria" id="ABB60920">
    <property type="protein sequence ID" value="ABB60920"/>
    <property type="gene ID" value="SDY_0736"/>
</dbReference>
<dbReference type="KEGG" id="sdy:SDY_0736"/>
<dbReference type="PATRIC" id="fig|300267.13.peg.850"/>
<dbReference type="HOGENOM" id="CLU_014689_0_0_6"/>
<dbReference type="Proteomes" id="UP000002716">
    <property type="component" value="Chromosome"/>
</dbReference>
<dbReference type="GO" id="GO:0051539">
    <property type="term" value="F:4 iron, 4 sulfur cluster binding"/>
    <property type="evidence" value="ECO:0007669"/>
    <property type="project" value="UniProtKB-KW"/>
</dbReference>
<dbReference type="GO" id="GO:0005506">
    <property type="term" value="F:iron ion binding"/>
    <property type="evidence" value="ECO:0007669"/>
    <property type="project" value="UniProtKB-UniRule"/>
</dbReference>
<dbReference type="GO" id="GO:0070041">
    <property type="term" value="F:rRNA (uridine-C5-)-methyltransferase activity"/>
    <property type="evidence" value="ECO:0007669"/>
    <property type="project" value="UniProtKB-UniRule"/>
</dbReference>
<dbReference type="GO" id="GO:0070475">
    <property type="term" value="P:rRNA base methylation"/>
    <property type="evidence" value="ECO:0007669"/>
    <property type="project" value="TreeGrafter"/>
</dbReference>
<dbReference type="CDD" id="cd02440">
    <property type="entry name" value="AdoMet_MTases"/>
    <property type="match status" value="1"/>
</dbReference>
<dbReference type="FunFam" id="2.40.50.1070:FF:000002">
    <property type="entry name" value="23S rRNA (uracil(747)-C(5))-methyltransferase RlmC"/>
    <property type="match status" value="1"/>
</dbReference>
<dbReference type="FunFam" id="3.40.50.150:FF:000049">
    <property type="entry name" value="23S rRNA (uracil(747)-C(5))-methyltransferase RlmC"/>
    <property type="match status" value="1"/>
</dbReference>
<dbReference type="Gene3D" id="2.40.50.1070">
    <property type="match status" value="1"/>
</dbReference>
<dbReference type="Gene3D" id="3.40.50.150">
    <property type="entry name" value="Vaccinia Virus protein VP39"/>
    <property type="match status" value="1"/>
</dbReference>
<dbReference type="HAMAP" id="MF_01012">
    <property type="entry name" value="23SrRNA_methyltr_RlmC"/>
    <property type="match status" value="1"/>
</dbReference>
<dbReference type="InterPro" id="IPR011825">
    <property type="entry name" value="23SrRNA_MeTrfase_RlmC"/>
</dbReference>
<dbReference type="InterPro" id="IPR030390">
    <property type="entry name" value="MeTrfase_TrmA_AS"/>
</dbReference>
<dbReference type="InterPro" id="IPR030391">
    <property type="entry name" value="MeTrfase_TrmA_CS"/>
</dbReference>
<dbReference type="InterPro" id="IPR029063">
    <property type="entry name" value="SAM-dependent_MTases_sf"/>
</dbReference>
<dbReference type="InterPro" id="IPR010280">
    <property type="entry name" value="U5_MeTrfase_fam"/>
</dbReference>
<dbReference type="NCBIfam" id="TIGR02085">
    <property type="entry name" value="meth_trns_rumB"/>
    <property type="match status" value="1"/>
</dbReference>
<dbReference type="PANTHER" id="PTHR11061">
    <property type="entry name" value="RNA M5U METHYLTRANSFERASE"/>
    <property type="match status" value="1"/>
</dbReference>
<dbReference type="PANTHER" id="PTHR11061:SF30">
    <property type="entry name" value="TRNA (URACIL(54)-C(5))-METHYLTRANSFERASE"/>
    <property type="match status" value="1"/>
</dbReference>
<dbReference type="Pfam" id="PF05958">
    <property type="entry name" value="tRNA_U5-meth_tr"/>
    <property type="match status" value="1"/>
</dbReference>
<dbReference type="SUPFAM" id="SSF53335">
    <property type="entry name" value="S-adenosyl-L-methionine-dependent methyltransferases"/>
    <property type="match status" value="1"/>
</dbReference>
<dbReference type="PROSITE" id="PS51687">
    <property type="entry name" value="SAM_MT_RNA_M5U"/>
    <property type="match status" value="1"/>
</dbReference>
<dbReference type="PROSITE" id="PS01230">
    <property type="entry name" value="TRMA_1"/>
    <property type="match status" value="1"/>
</dbReference>
<dbReference type="PROSITE" id="PS01231">
    <property type="entry name" value="TRMA_2"/>
    <property type="match status" value="1"/>
</dbReference>
<proteinExistence type="inferred from homology"/>
<reference key="1">
    <citation type="journal article" date="2005" name="Nucleic Acids Res.">
        <title>Genome dynamics and diversity of Shigella species, the etiologic agents of bacillary dysentery.</title>
        <authorList>
            <person name="Yang F."/>
            <person name="Yang J."/>
            <person name="Zhang X."/>
            <person name="Chen L."/>
            <person name="Jiang Y."/>
            <person name="Yan Y."/>
            <person name="Tang X."/>
            <person name="Wang J."/>
            <person name="Xiong Z."/>
            <person name="Dong J."/>
            <person name="Xue Y."/>
            <person name="Zhu Y."/>
            <person name="Xu X."/>
            <person name="Sun L."/>
            <person name="Chen S."/>
            <person name="Nie H."/>
            <person name="Peng J."/>
            <person name="Xu J."/>
            <person name="Wang Y."/>
            <person name="Yuan Z."/>
            <person name="Wen Y."/>
            <person name="Yao Z."/>
            <person name="Shen Y."/>
            <person name="Qiang B."/>
            <person name="Hou Y."/>
            <person name="Yu J."/>
            <person name="Jin Q."/>
        </authorList>
    </citation>
    <scope>NUCLEOTIDE SEQUENCE [LARGE SCALE GENOMIC DNA]</scope>
    <source>
        <strain>Sd197</strain>
    </source>
</reference>
<name>RLMC_SHIDS</name>
<keyword id="KW-0004">4Fe-4S</keyword>
<keyword id="KW-0408">Iron</keyword>
<keyword id="KW-0411">Iron-sulfur</keyword>
<keyword id="KW-0479">Metal-binding</keyword>
<keyword id="KW-0489">Methyltransferase</keyword>
<keyword id="KW-1185">Reference proteome</keyword>
<keyword id="KW-0698">rRNA processing</keyword>
<keyword id="KW-0949">S-adenosyl-L-methionine</keyword>
<keyword id="KW-0808">Transferase</keyword>
<gene>
    <name evidence="1" type="primary">rlmC</name>
    <name type="synonym">rumB</name>
    <name type="ordered locus">SDY_0736</name>
</gene>
<feature type="chain" id="PRO_0000282019" description="23S rRNA (uracil(747)-C(5))-methyltransferase RlmC">
    <location>
        <begin position="1"/>
        <end position="375"/>
    </location>
</feature>
<feature type="active site" description="Nucleophile" evidence="1">
    <location>
        <position position="334"/>
    </location>
</feature>
<feature type="binding site" evidence="1">
    <location>
        <position position="3"/>
    </location>
    <ligand>
        <name>[4Fe-4S] cluster</name>
        <dbReference type="ChEBI" id="CHEBI:49883"/>
    </ligand>
</feature>
<feature type="binding site" evidence="1">
    <location>
        <position position="11"/>
    </location>
    <ligand>
        <name>[4Fe-4S] cluster</name>
        <dbReference type="ChEBI" id="CHEBI:49883"/>
    </ligand>
</feature>
<feature type="binding site" evidence="1">
    <location>
        <position position="14"/>
    </location>
    <ligand>
        <name>[4Fe-4S] cluster</name>
        <dbReference type="ChEBI" id="CHEBI:49883"/>
    </ligand>
</feature>
<feature type="binding site" evidence="1">
    <location>
        <position position="87"/>
    </location>
    <ligand>
        <name>[4Fe-4S] cluster</name>
        <dbReference type="ChEBI" id="CHEBI:49883"/>
    </ligand>
</feature>
<feature type="binding site" evidence="1">
    <location>
        <position position="212"/>
    </location>
    <ligand>
        <name>S-adenosyl-L-methionine</name>
        <dbReference type="ChEBI" id="CHEBI:59789"/>
    </ligand>
</feature>
<feature type="binding site" evidence="1">
    <location>
        <position position="241"/>
    </location>
    <ligand>
        <name>S-adenosyl-L-methionine</name>
        <dbReference type="ChEBI" id="CHEBI:59789"/>
    </ligand>
</feature>
<feature type="binding site" evidence="1">
    <location>
        <position position="262"/>
    </location>
    <ligand>
        <name>S-adenosyl-L-methionine</name>
        <dbReference type="ChEBI" id="CHEBI:59789"/>
    </ligand>
</feature>
<feature type="binding site" evidence="1">
    <location>
        <position position="307"/>
    </location>
    <ligand>
        <name>S-adenosyl-L-methionine</name>
        <dbReference type="ChEBI" id="CHEBI:59789"/>
    </ligand>
</feature>
<comment type="function">
    <text evidence="1">Catalyzes the formation of 5-methyl-uridine at position 747 (m5U747) in 23S rRNA.</text>
</comment>
<comment type="catalytic activity">
    <reaction evidence="1">
        <text>uridine(747) in 23S rRNA + S-adenosyl-L-methionine = 5-methyluridine(747) in 23S rRNA + S-adenosyl-L-homocysteine + H(+)</text>
        <dbReference type="Rhea" id="RHEA:42628"/>
        <dbReference type="Rhea" id="RHEA-COMP:10154"/>
        <dbReference type="Rhea" id="RHEA-COMP:10155"/>
        <dbReference type="ChEBI" id="CHEBI:15378"/>
        <dbReference type="ChEBI" id="CHEBI:57856"/>
        <dbReference type="ChEBI" id="CHEBI:59789"/>
        <dbReference type="ChEBI" id="CHEBI:65315"/>
        <dbReference type="ChEBI" id="CHEBI:74447"/>
        <dbReference type="EC" id="2.1.1.189"/>
    </reaction>
</comment>
<comment type="similarity">
    <text evidence="1">Belongs to the class I-like SAM-binding methyltransferase superfamily. RNA M5U methyltransferase family. RlmC subfamily.</text>
</comment>
<protein>
    <recommendedName>
        <fullName evidence="1">23S rRNA (uracil(747)-C(5))-methyltransferase RlmC</fullName>
        <ecNumber evidence="1">2.1.1.189</ecNumber>
    </recommendedName>
    <alternativeName>
        <fullName evidence="1">23S rRNA(m5U747)-methyltransferase</fullName>
    </alternativeName>
</protein>